<gene>
    <name evidence="4" type="primary">verK</name>
</gene>
<evidence type="ECO:0000250" key="1">
    <source>
        <dbReference type="UniProtKB" id="E9R9Y3"/>
    </source>
</evidence>
<evidence type="ECO:0000269" key="2">
    <source>
    </source>
</evidence>
<evidence type="ECO:0000269" key="3">
    <source>
    </source>
</evidence>
<evidence type="ECO:0000303" key="4">
    <source>
    </source>
</evidence>
<evidence type="ECO:0000305" key="5"/>
<evidence type="ECO:0000305" key="6">
    <source>
    </source>
</evidence>
<feature type="chain" id="PRO_0000450166" description="Gamma-glutamyl cyclotransferase verK">
    <location>
        <begin position="1"/>
        <end position="179"/>
    </location>
</feature>
<name>VERK_CLORO</name>
<reference key="1">
    <citation type="journal article" date="2017" name="Fungal Genet. Biol.">
        <title>Identification and characterization of the verticillin biosynthetic gene cluster in Clonostachys rogersoniana.</title>
        <authorList>
            <person name="Wang Y."/>
            <person name="Hu P."/>
            <person name="Pan Y."/>
            <person name="Zhu Y."/>
            <person name="Liu X."/>
            <person name="Che Y."/>
            <person name="Liu G."/>
        </authorList>
    </citation>
    <scope>NUCLEOTIDE SEQUENCE [GENOMIC DNA]</scope>
    <scope>FUNCTION</scope>
    <scope>DISRUPTION PHENOTYPE</scope>
    <scope>PATHWAY</scope>
    <source>
        <strain>XZC04-CC-302</strain>
    </source>
</reference>
<reference key="2">
    <citation type="journal article" date="2017" name="Microbiology">
        <title>VerZ, a Zn(II)2Cys6 DNA-binding protein, regulates the biosynthesis of verticillin in Clonostachys rogersoniana.</title>
        <authorList>
            <person name="Guo Z."/>
            <person name="Hao T."/>
            <person name="Wang Y."/>
            <person name="Pan Y."/>
            <person name="Ren F."/>
            <person name="Liu X."/>
            <person name="Che Y."/>
            <person name="Liu G."/>
        </authorList>
    </citation>
    <scope>INDUCTION</scope>
</reference>
<protein>
    <recommendedName>
        <fullName evidence="1">Gamma-glutamyl cyclotransferase verK</fullName>
        <shortName evidence="1">GGCT verK</shortName>
        <ecNumber evidence="1">4.3.2.9</ecNumber>
    </recommendedName>
    <alternativeName>
        <fullName evidence="4">Verticillin biosynthesis cluster protein K</fullName>
    </alternativeName>
</protein>
<proteinExistence type="evidence at transcript level"/>
<comment type="function">
    <text evidence="2 6">Gamma-glutamyl cyclotransferase; part of the gene cluster that mediates the biosynthesis of 11'-deoxyverticillin A, one of the dimeric epipolythiodioxopiperazines (ETPs) from the verticillin family that act as mycotoxins (PubMed:28376389). 11'-deoxyverticillin A is required for normal conidiation (PubMed:28376389). The nonribosomal peptide synthetase verP is speculated to be responsible for condensation of amino acids to form the carbon skeleton of verticillin, whereas the cluster-specific tailoring enzymes are involved in further modifications leading to the production of 11'-deoxyverticillin A (Probable).</text>
</comment>
<comment type="catalytic activity">
    <reaction evidence="1">
        <text>an alpha-(gamma-L-glutamyl)-L-amino acid = 5-oxo-L-proline + an L-alpha-amino acid</text>
        <dbReference type="Rhea" id="RHEA:20505"/>
        <dbReference type="ChEBI" id="CHEBI:58402"/>
        <dbReference type="ChEBI" id="CHEBI:59869"/>
        <dbReference type="ChEBI" id="CHEBI:71304"/>
        <dbReference type="EC" id="4.3.2.9"/>
    </reaction>
</comment>
<comment type="pathway">
    <text evidence="2">Mycotoxin biosynthesis.</text>
</comment>
<comment type="induction">
    <text evidence="3">Expression is regulated by the cluster-specific regulator verZ.</text>
</comment>
<comment type="disruption phenotype">
    <text evidence="2">Dicreases the production of 11'-deoxyverticillin A.</text>
</comment>
<comment type="similarity">
    <text evidence="5">Belongs to the class-I pyridoxal-phosphate-dependent aminotransferase family.</text>
</comment>
<organism>
    <name type="scientific">Clonostachys rogersoniana</name>
    <dbReference type="NCBI Taxonomy" id="122658"/>
    <lineage>
        <taxon>Eukaryota</taxon>
        <taxon>Fungi</taxon>
        <taxon>Dikarya</taxon>
        <taxon>Ascomycota</taxon>
        <taxon>Pezizomycotina</taxon>
        <taxon>Sordariomycetes</taxon>
        <taxon>Hypocreomycetidae</taxon>
        <taxon>Hypocreales</taxon>
        <taxon>Bionectriaceae</taxon>
        <taxon>Clonostachys</taxon>
    </lineage>
</organism>
<accession>A0A1U9YI11</accession>
<dbReference type="EC" id="4.3.2.9" evidence="1"/>
<dbReference type="EMBL" id="KY359203">
    <property type="protein sequence ID" value="AQZ42164.1"/>
    <property type="molecule type" value="Genomic_DNA"/>
</dbReference>
<dbReference type="SMR" id="A0A1U9YI11"/>
<dbReference type="GO" id="GO:0003839">
    <property type="term" value="F:gamma-glutamylcyclotransferase activity"/>
    <property type="evidence" value="ECO:0007669"/>
    <property type="project" value="UniProtKB-EC"/>
</dbReference>
<dbReference type="CDD" id="cd06661">
    <property type="entry name" value="GGCT_like"/>
    <property type="match status" value="1"/>
</dbReference>
<dbReference type="Gene3D" id="3.10.490.10">
    <property type="entry name" value="Gamma-glutamyl cyclotransferase-like"/>
    <property type="match status" value="1"/>
</dbReference>
<dbReference type="InterPro" id="IPR017939">
    <property type="entry name" value="G-Glutamylcylcotransferase"/>
</dbReference>
<dbReference type="InterPro" id="IPR013024">
    <property type="entry name" value="GGCT-like"/>
</dbReference>
<dbReference type="PANTHER" id="PTHR12935">
    <property type="entry name" value="GAMMA-GLUTAMYLCYCLOTRANSFERASE"/>
    <property type="match status" value="1"/>
</dbReference>
<dbReference type="PANTHER" id="PTHR12935:SF0">
    <property type="entry name" value="GAMMA-GLUTAMYLCYCLOTRANSFERASE"/>
    <property type="match status" value="1"/>
</dbReference>
<keyword id="KW-0456">Lyase</keyword>
<sequence>MTNTERSSSWKASSIPDQPMWYFGYGSNMKASSMADRKVTPLSTKIVTVPTHFVTFDIFGIPYSEPSYASLEQFPDGGTGKLDLVHHISRTQVLPACGVAHLLSPNDFHRLLVTEGSGVVYNLVEVQAYEMNKDGQPIPAPFTVHTLKAKWPQRPNGTPSARYMVRFLGLLSSSTYYQY</sequence>